<feature type="signal peptide" evidence="3">
    <location>
        <begin position="1"/>
        <end position="27"/>
    </location>
</feature>
<feature type="chain" id="PRO_0000253315" description="Putative wall-associated receptor kinase-like 11">
    <location>
        <begin position="28"/>
        <end position="788"/>
    </location>
</feature>
<feature type="topological domain" description="Extracellular" evidence="3">
    <location>
        <begin position="28"/>
        <end position="375"/>
    </location>
</feature>
<feature type="transmembrane region" description="Helical" evidence="3">
    <location>
        <begin position="376"/>
        <end position="396"/>
    </location>
</feature>
<feature type="topological domain" description="Cytoplasmic" evidence="3">
    <location>
        <begin position="397"/>
        <end position="788"/>
    </location>
</feature>
<feature type="domain" description="Protein kinase" evidence="4">
    <location>
        <begin position="451"/>
        <end position="726"/>
    </location>
</feature>
<feature type="region of interest" description="Atypical EGF-like">
    <location>
        <begin position="306"/>
        <end position="369"/>
    </location>
</feature>
<feature type="active site" description="Proton acceptor" evidence="4 5">
    <location>
        <position position="576"/>
    </location>
</feature>
<feature type="binding site" evidence="4">
    <location>
        <begin position="457"/>
        <end position="465"/>
    </location>
    <ligand>
        <name>ATP</name>
        <dbReference type="ChEBI" id="CHEBI:30616"/>
    </ligand>
</feature>
<feature type="binding site" evidence="4">
    <location>
        <position position="479"/>
    </location>
    <ligand>
        <name>ATP</name>
        <dbReference type="ChEBI" id="CHEBI:30616"/>
    </ligand>
</feature>
<feature type="modified residue" description="Phosphotyrosine" evidence="2">
    <location>
        <position position="524"/>
    </location>
</feature>
<feature type="modified residue" description="Phosphothreonine" evidence="2">
    <location>
        <position position="610"/>
    </location>
</feature>
<feature type="modified residue" description="Phosphothreonine" evidence="2">
    <location>
        <position position="615"/>
    </location>
</feature>
<feature type="modified residue" description="Phosphotyrosine" evidence="2">
    <location>
        <position position="623"/>
    </location>
</feature>
<feature type="glycosylation site" description="N-linked (GlcNAc...) asparagine" evidence="3">
    <location>
        <position position="65"/>
    </location>
</feature>
<feature type="glycosylation site" description="N-linked (GlcNAc...) asparagine" evidence="3">
    <location>
        <position position="80"/>
    </location>
</feature>
<feature type="glycosylation site" description="N-linked (GlcNAc...) asparagine" evidence="3">
    <location>
        <position position="121"/>
    </location>
</feature>
<feature type="glycosylation site" description="N-linked (GlcNAc...) asparagine" evidence="3">
    <location>
        <position position="159"/>
    </location>
</feature>
<feature type="glycosylation site" description="N-linked (GlcNAc...) asparagine" evidence="3">
    <location>
        <position position="233"/>
    </location>
</feature>
<feature type="glycosylation site" description="N-linked (GlcNAc...) asparagine" evidence="3">
    <location>
        <position position="253"/>
    </location>
</feature>
<feature type="glycosylation site" description="N-linked (GlcNAc...) asparagine" evidence="3">
    <location>
        <position position="278"/>
    </location>
</feature>
<feature type="glycosylation site" description="N-linked (GlcNAc...) asparagine" evidence="3">
    <location>
        <position position="295"/>
    </location>
</feature>
<feature type="glycosylation site" description="N-linked (GlcNAc...) asparagine" evidence="3">
    <location>
        <position position="310"/>
    </location>
</feature>
<feature type="glycosylation site" description="N-linked (GlcNAc...) asparagine" evidence="3">
    <location>
        <position position="372"/>
    </location>
</feature>
<feature type="disulfide bond" evidence="1">
    <location>
        <begin position="308"/>
        <end position="321"/>
    </location>
</feature>
<feature type="disulfide bond" evidence="1">
    <location>
        <begin position="343"/>
        <end position="360"/>
    </location>
</feature>
<feature type="disulfide bond" evidence="1">
    <location>
        <begin position="354"/>
        <end position="369"/>
    </location>
</feature>
<proteinExistence type="inferred from homology"/>
<reference key="1">
    <citation type="journal article" date="2000" name="Nature">
        <title>Sequence and analysis of chromosome 1 of the plant Arabidopsis thaliana.</title>
        <authorList>
            <person name="Theologis A."/>
            <person name="Ecker J.R."/>
            <person name="Palm C.J."/>
            <person name="Federspiel N.A."/>
            <person name="Kaul S."/>
            <person name="White O."/>
            <person name="Alonso J."/>
            <person name="Altafi H."/>
            <person name="Araujo R."/>
            <person name="Bowman C.L."/>
            <person name="Brooks S.Y."/>
            <person name="Buehler E."/>
            <person name="Chan A."/>
            <person name="Chao Q."/>
            <person name="Chen H."/>
            <person name="Cheuk R.F."/>
            <person name="Chin C.W."/>
            <person name="Chung M.K."/>
            <person name="Conn L."/>
            <person name="Conway A.B."/>
            <person name="Conway A.R."/>
            <person name="Creasy T.H."/>
            <person name="Dewar K."/>
            <person name="Dunn P."/>
            <person name="Etgu P."/>
            <person name="Feldblyum T.V."/>
            <person name="Feng J.-D."/>
            <person name="Fong B."/>
            <person name="Fujii C.Y."/>
            <person name="Gill J.E."/>
            <person name="Goldsmith A.D."/>
            <person name="Haas B."/>
            <person name="Hansen N.F."/>
            <person name="Hughes B."/>
            <person name="Huizar L."/>
            <person name="Hunter J.L."/>
            <person name="Jenkins J."/>
            <person name="Johnson-Hopson C."/>
            <person name="Khan S."/>
            <person name="Khaykin E."/>
            <person name="Kim C.J."/>
            <person name="Koo H.L."/>
            <person name="Kremenetskaia I."/>
            <person name="Kurtz D.B."/>
            <person name="Kwan A."/>
            <person name="Lam B."/>
            <person name="Langin-Hooper S."/>
            <person name="Lee A."/>
            <person name="Lee J.M."/>
            <person name="Lenz C.A."/>
            <person name="Li J.H."/>
            <person name="Li Y.-P."/>
            <person name="Lin X."/>
            <person name="Liu S.X."/>
            <person name="Liu Z.A."/>
            <person name="Luros J.S."/>
            <person name="Maiti R."/>
            <person name="Marziali A."/>
            <person name="Militscher J."/>
            <person name="Miranda M."/>
            <person name="Nguyen M."/>
            <person name="Nierman W.C."/>
            <person name="Osborne B.I."/>
            <person name="Pai G."/>
            <person name="Peterson J."/>
            <person name="Pham P.K."/>
            <person name="Rizzo M."/>
            <person name="Rooney T."/>
            <person name="Rowley D."/>
            <person name="Sakano H."/>
            <person name="Salzberg S.L."/>
            <person name="Schwartz J.R."/>
            <person name="Shinn P."/>
            <person name="Southwick A.M."/>
            <person name="Sun H."/>
            <person name="Tallon L.J."/>
            <person name="Tambunga G."/>
            <person name="Toriumi M.J."/>
            <person name="Town C.D."/>
            <person name="Utterback T."/>
            <person name="Van Aken S."/>
            <person name="Vaysberg M."/>
            <person name="Vysotskaia V.S."/>
            <person name="Walker M."/>
            <person name="Wu D."/>
            <person name="Yu G."/>
            <person name="Fraser C.M."/>
            <person name="Venter J.C."/>
            <person name="Davis R.W."/>
        </authorList>
    </citation>
    <scope>NUCLEOTIDE SEQUENCE [LARGE SCALE GENOMIC DNA]</scope>
    <source>
        <strain>cv. Columbia</strain>
    </source>
</reference>
<reference key="2">
    <citation type="journal article" date="2017" name="Plant J.">
        <title>Araport11: a complete reannotation of the Arabidopsis thaliana reference genome.</title>
        <authorList>
            <person name="Cheng C.Y."/>
            <person name="Krishnakumar V."/>
            <person name="Chan A.P."/>
            <person name="Thibaud-Nissen F."/>
            <person name="Schobel S."/>
            <person name="Town C.D."/>
        </authorList>
    </citation>
    <scope>GENOME REANNOTATION</scope>
    <source>
        <strain>cv. Columbia</strain>
    </source>
</reference>
<reference key="3">
    <citation type="journal article" date="2002" name="Plant Physiol.">
        <title>The cell wall-associated kinase (WAK) and WAK-like kinase gene family.</title>
        <authorList>
            <person name="Verica J.A."/>
            <person name="He Z.-H."/>
        </authorList>
    </citation>
    <scope>GENE FAMILY ORGANIZATION</scope>
</reference>
<gene>
    <name type="primary">WAKL11</name>
    <name type="ordered locus">At1g19390</name>
    <name type="ORF">F18O14.11</name>
</gene>
<dbReference type="EC" id="2.7.11.-"/>
<dbReference type="EMBL" id="AC025808">
    <property type="protein sequence ID" value="AAF79451.1"/>
    <property type="status" value="ALT_SEQ"/>
    <property type="molecule type" value="Genomic_DNA"/>
</dbReference>
<dbReference type="EMBL" id="CP002684">
    <property type="protein sequence ID" value="AEE29842.1"/>
    <property type="molecule type" value="Genomic_DNA"/>
</dbReference>
<dbReference type="PIR" id="A86327">
    <property type="entry name" value="A86327"/>
</dbReference>
<dbReference type="RefSeq" id="NP_173372.1">
    <property type="nucleotide sequence ID" value="NM_101796.2"/>
</dbReference>
<dbReference type="SMR" id="Q9LN59"/>
<dbReference type="STRING" id="3702.Q9LN59"/>
<dbReference type="GlyCosmos" id="Q9LN59">
    <property type="glycosylation" value="10 sites, No reported glycans"/>
</dbReference>
<dbReference type="GlyGen" id="Q9LN59">
    <property type="glycosylation" value="10 sites"/>
</dbReference>
<dbReference type="PaxDb" id="3702-AT1G19390.1"/>
<dbReference type="EnsemblPlants" id="AT1G19390.1">
    <property type="protein sequence ID" value="AT1G19390.1"/>
    <property type="gene ID" value="AT1G19390"/>
</dbReference>
<dbReference type="GeneID" id="838522"/>
<dbReference type="Gramene" id="AT1G19390.1">
    <property type="protein sequence ID" value="AT1G19390.1"/>
    <property type="gene ID" value="AT1G19390"/>
</dbReference>
<dbReference type="KEGG" id="ath:AT1G19390"/>
<dbReference type="Araport" id="AT1G19390"/>
<dbReference type="TAIR" id="AT1G19390"/>
<dbReference type="eggNOG" id="ENOG502RMXX">
    <property type="taxonomic scope" value="Eukaryota"/>
</dbReference>
<dbReference type="HOGENOM" id="CLU_000288_43_5_1"/>
<dbReference type="InParanoid" id="Q9LN59"/>
<dbReference type="OMA" id="ANCGCNQ"/>
<dbReference type="PhylomeDB" id="Q9LN59"/>
<dbReference type="PRO" id="PR:Q9LN59"/>
<dbReference type="Proteomes" id="UP000006548">
    <property type="component" value="Chromosome 1"/>
</dbReference>
<dbReference type="ExpressionAtlas" id="Q9LN59">
    <property type="expression patterns" value="baseline and differential"/>
</dbReference>
<dbReference type="GO" id="GO:0016020">
    <property type="term" value="C:membrane"/>
    <property type="evidence" value="ECO:0007669"/>
    <property type="project" value="UniProtKB-SubCell"/>
</dbReference>
<dbReference type="GO" id="GO:0005524">
    <property type="term" value="F:ATP binding"/>
    <property type="evidence" value="ECO:0007669"/>
    <property type="project" value="UniProtKB-KW"/>
</dbReference>
<dbReference type="GO" id="GO:0005509">
    <property type="term" value="F:calcium ion binding"/>
    <property type="evidence" value="ECO:0007669"/>
    <property type="project" value="InterPro"/>
</dbReference>
<dbReference type="GO" id="GO:0030247">
    <property type="term" value="F:polysaccharide binding"/>
    <property type="evidence" value="ECO:0007669"/>
    <property type="project" value="InterPro"/>
</dbReference>
<dbReference type="GO" id="GO:0106310">
    <property type="term" value="F:protein serine kinase activity"/>
    <property type="evidence" value="ECO:0007669"/>
    <property type="project" value="RHEA"/>
</dbReference>
<dbReference type="GO" id="GO:0004674">
    <property type="term" value="F:protein serine/threonine kinase activity"/>
    <property type="evidence" value="ECO:0007669"/>
    <property type="project" value="UniProtKB-KW"/>
</dbReference>
<dbReference type="GO" id="GO:0007166">
    <property type="term" value="P:cell surface receptor signaling pathway"/>
    <property type="evidence" value="ECO:0007669"/>
    <property type="project" value="InterPro"/>
</dbReference>
<dbReference type="CDD" id="cd00054">
    <property type="entry name" value="EGF_CA"/>
    <property type="match status" value="1"/>
</dbReference>
<dbReference type="CDD" id="cd14066">
    <property type="entry name" value="STKc_IRAK"/>
    <property type="match status" value="1"/>
</dbReference>
<dbReference type="FunFam" id="1.10.510.10:FF:000084">
    <property type="entry name" value="Wall-associated receptor kinase 2"/>
    <property type="match status" value="1"/>
</dbReference>
<dbReference type="FunFam" id="3.30.200.20:FF:000043">
    <property type="entry name" value="Wall-associated receptor kinase 2"/>
    <property type="match status" value="1"/>
</dbReference>
<dbReference type="Gene3D" id="2.10.25.10">
    <property type="entry name" value="Laminin"/>
    <property type="match status" value="1"/>
</dbReference>
<dbReference type="Gene3D" id="3.30.200.20">
    <property type="entry name" value="Phosphorylase Kinase, domain 1"/>
    <property type="match status" value="1"/>
</dbReference>
<dbReference type="Gene3D" id="1.10.510.10">
    <property type="entry name" value="Transferase(Phosphotransferase) domain 1"/>
    <property type="match status" value="1"/>
</dbReference>
<dbReference type="InterPro" id="IPR018097">
    <property type="entry name" value="EGF_Ca-bd_CS"/>
</dbReference>
<dbReference type="InterPro" id="IPR011009">
    <property type="entry name" value="Kinase-like_dom_sf"/>
</dbReference>
<dbReference type="InterPro" id="IPR000719">
    <property type="entry name" value="Prot_kinase_dom"/>
</dbReference>
<dbReference type="InterPro" id="IPR008271">
    <property type="entry name" value="Ser/Thr_kinase_AS"/>
</dbReference>
<dbReference type="InterPro" id="IPR013695">
    <property type="entry name" value="WAK"/>
</dbReference>
<dbReference type="InterPro" id="IPR045274">
    <property type="entry name" value="WAK-like"/>
</dbReference>
<dbReference type="InterPro" id="IPR025287">
    <property type="entry name" value="WAK_GUB"/>
</dbReference>
<dbReference type="PANTHER" id="PTHR27005:SF239">
    <property type="entry name" value="WALL-ASSOCIATED RECEPTOR KINASE-LIKE 11-RELATED"/>
    <property type="match status" value="1"/>
</dbReference>
<dbReference type="PANTHER" id="PTHR27005">
    <property type="entry name" value="WALL-ASSOCIATED RECEPTOR KINASE-LIKE 21"/>
    <property type="match status" value="1"/>
</dbReference>
<dbReference type="Pfam" id="PF13947">
    <property type="entry name" value="GUB_WAK_bind"/>
    <property type="match status" value="1"/>
</dbReference>
<dbReference type="Pfam" id="PF00069">
    <property type="entry name" value="Pkinase"/>
    <property type="match status" value="1"/>
</dbReference>
<dbReference type="Pfam" id="PF08488">
    <property type="entry name" value="WAK"/>
    <property type="match status" value="1"/>
</dbReference>
<dbReference type="SMART" id="SM00220">
    <property type="entry name" value="S_TKc"/>
    <property type="match status" value="1"/>
</dbReference>
<dbReference type="SUPFAM" id="SSF56112">
    <property type="entry name" value="Protein kinase-like (PK-like)"/>
    <property type="match status" value="1"/>
</dbReference>
<dbReference type="PROSITE" id="PS01187">
    <property type="entry name" value="EGF_CA"/>
    <property type="match status" value="1"/>
</dbReference>
<dbReference type="PROSITE" id="PS50011">
    <property type="entry name" value="PROTEIN_KINASE_DOM"/>
    <property type="match status" value="1"/>
</dbReference>
<dbReference type="PROSITE" id="PS00108">
    <property type="entry name" value="PROTEIN_KINASE_ST"/>
    <property type="match status" value="1"/>
</dbReference>
<keyword id="KW-0067">ATP-binding</keyword>
<keyword id="KW-1015">Disulfide bond</keyword>
<keyword id="KW-0325">Glycoprotein</keyword>
<keyword id="KW-0418">Kinase</keyword>
<keyword id="KW-0472">Membrane</keyword>
<keyword id="KW-0547">Nucleotide-binding</keyword>
<keyword id="KW-0597">Phosphoprotein</keyword>
<keyword id="KW-1185">Reference proteome</keyword>
<keyword id="KW-0723">Serine/threonine-protein kinase</keyword>
<keyword id="KW-0732">Signal</keyword>
<keyword id="KW-0808">Transferase</keyword>
<keyword id="KW-0812">Transmembrane</keyword>
<keyword id="KW-1133">Transmembrane helix</keyword>
<sequence length="788" mass="87391">MRCDNNYSFSILFSLLLILILDSKVVSLSTSCQSKSVCGNINIPYPFGIEKGCYLNEWYKIECKNATYPFLFKMGMAVVNISLPGDDGYNNPVSYGSIRVKIPITSIGCSRDGKESGSVLNFTDSPFYFGIGNSLVAVGCNSKASLTNINPSKVGCELNCTASKETLPSKSIPFFDKTGCSNNKLPYYSSLCTKNNGEDERSCDGNGCCIAGLLDSEAPQVIGINIESFDHGNSTKLECRVAFLTDDVSPFSNASEPKRLFAKRYATVSLGWVIQTKNLSFVNSLSCKNTKEYDNSTYNIKLVTSCICNNVTISGTDYANCGCSQGYEGNPYLPGGCKDINECLRNSYGQRQNCRESDTCVNLPGTFNCIGNKTRVTMIGVGSAFGILVLVVGIWWLRKFLKKRRMSKRKRKFFKRNGGLLLQQQLNTNKGNVEKTRIFSSRELEKATDNFSESRILGQGGQGTVYKGMLVDGRTVAVKKSKVVDEDKLEEFINEVVILSQINHRHVVKLLGCCLETEVPTLVYEFIPNGNLFQHIHEESDDYTKTWGMRLRIAVDIAGALSYLHSAASSPIYHRDIKSTNILLDEKYRTKVSDFGTSRSVTIDHTHWTTVISGTVGYVDPEYYGSSQYTDKSDVYSFGVVLVELITGEKPVITVSNSQEIRGLADHFRVAMKENRFFEIMDARIRDGCKPEQVMAVANLARRCLNSKGKKRPCMRKVFTDLEKILASQEDSLVNIENDDGADDEEEGMTMINIDDSQTIYVTAPAPSIVASSSSSDVQPLFPHPTWI</sequence>
<comment type="function">
    <text>Putative serine/threonine-protein kinase that may function as a signaling receptor of extracellular matrix component.</text>
</comment>
<comment type="catalytic activity">
    <reaction>
        <text>L-seryl-[protein] + ATP = O-phospho-L-seryl-[protein] + ADP + H(+)</text>
        <dbReference type="Rhea" id="RHEA:17989"/>
        <dbReference type="Rhea" id="RHEA-COMP:9863"/>
        <dbReference type="Rhea" id="RHEA-COMP:11604"/>
        <dbReference type="ChEBI" id="CHEBI:15378"/>
        <dbReference type="ChEBI" id="CHEBI:29999"/>
        <dbReference type="ChEBI" id="CHEBI:30616"/>
        <dbReference type="ChEBI" id="CHEBI:83421"/>
        <dbReference type="ChEBI" id="CHEBI:456216"/>
    </reaction>
</comment>
<comment type="catalytic activity">
    <reaction>
        <text>L-threonyl-[protein] + ATP = O-phospho-L-threonyl-[protein] + ADP + H(+)</text>
        <dbReference type="Rhea" id="RHEA:46608"/>
        <dbReference type="Rhea" id="RHEA-COMP:11060"/>
        <dbReference type="Rhea" id="RHEA-COMP:11605"/>
        <dbReference type="ChEBI" id="CHEBI:15378"/>
        <dbReference type="ChEBI" id="CHEBI:30013"/>
        <dbReference type="ChEBI" id="CHEBI:30616"/>
        <dbReference type="ChEBI" id="CHEBI:61977"/>
        <dbReference type="ChEBI" id="CHEBI:456216"/>
    </reaction>
</comment>
<comment type="subcellular location">
    <subcellularLocation>
        <location evidence="6">Membrane</location>
        <topology evidence="6">Single-pass type I membrane protein</topology>
    </subcellularLocation>
</comment>
<comment type="domain">
    <text>The EGF-like region is specific to this family of proteins and seems to consist of the C-terminal of an EGF-like domain fused to the N-terminal of another one.</text>
</comment>
<comment type="similarity">
    <text evidence="4">Belongs to the protein kinase superfamily. Ser/Thr protein kinase family.</text>
</comment>
<comment type="sequence caution" evidence="6">
    <conflict type="erroneous gene model prediction">
        <sequence resource="EMBL-CDS" id="AAF79451"/>
    </conflict>
</comment>
<protein>
    <recommendedName>
        <fullName>Putative wall-associated receptor kinase-like 11</fullName>
        <ecNumber>2.7.11.-</ecNumber>
    </recommendedName>
</protein>
<evidence type="ECO:0000250" key="1"/>
<evidence type="ECO:0000250" key="2">
    <source>
        <dbReference type="UniProtKB" id="O48814"/>
    </source>
</evidence>
<evidence type="ECO:0000255" key="3"/>
<evidence type="ECO:0000255" key="4">
    <source>
        <dbReference type="PROSITE-ProRule" id="PRU00159"/>
    </source>
</evidence>
<evidence type="ECO:0000255" key="5">
    <source>
        <dbReference type="PROSITE-ProRule" id="PRU10027"/>
    </source>
</evidence>
<evidence type="ECO:0000305" key="6"/>
<organism>
    <name type="scientific">Arabidopsis thaliana</name>
    <name type="common">Mouse-ear cress</name>
    <dbReference type="NCBI Taxonomy" id="3702"/>
    <lineage>
        <taxon>Eukaryota</taxon>
        <taxon>Viridiplantae</taxon>
        <taxon>Streptophyta</taxon>
        <taxon>Embryophyta</taxon>
        <taxon>Tracheophyta</taxon>
        <taxon>Spermatophyta</taxon>
        <taxon>Magnoliopsida</taxon>
        <taxon>eudicotyledons</taxon>
        <taxon>Gunneridae</taxon>
        <taxon>Pentapetalae</taxon>
        <taxon>rosids</taxon>
        <taxon>malvids</taxon>
        <taxon>Brassicales</taxon>
        <taxon>Brassicaceae</taxon>
        <taxon>Camelineae</taxon>
        <taxon>Arabidopsis</taxon>
    </lineage>
</organism>
<name>WAKLK_ARATH</name>
<accession>Q9LN59</accession>